<organism>
    <name type="scientific">Kluyveromyces lactis (strain ATCC 8585 / CBS 2359 / DSM 70799 / NBRC 1267 / NRRL Y-1140 / WM37)</name>
    <name type="common">Yeast</name>
    <name type="synonym">Candida sphaerica</name>
    <dbReference type="NCBI Taxonomy" id="284590"/>
    <lineage>
        <taxon>Eukaryota</taxon>
        <taxon>Fungi</taxon>
        <taxon>Dikarya</taxon>
        <taxon>Ascomycota</taxon>
        <taxon>Saccharomycotina</taxon>
        <taxon>Saccharomycetes</taxon>
        <taxon>Saccharomycetales</taxon>
        <taxon>Saccharomycetaceae</taxon>
        <taxon>Kluyveromyces</taxon>
    </lineage>
</organism>
<accession>Q6CPB1</accession>
<keyword id="KW-0963">Cytoplasm</keyword>
<keyword id="KW-0539">Nucleus</keyword>
<keyword id="KW-1185">Reference proteome</keyword>
<keyword id="KW-0736">Signalosome</keyword>
<gene>
    <name type="primary">CSN12</name>
    <name type="ordered locus">KLLA0E06193g</name>
</gene>
<name>CSN12_KLULA</name>
<dbReference type="EMBL" id="CR382125">
    <property type="protein sequence ID" value="CAG99315.1"/>
    <property type="molecule type" value="Genomic_DNA"/>
</dbReference>
<dbReference type="RefSeq" id="XP_454228.1">
    <property type="nucleotide sequence ID" value="XM_454228.1"/>
</dbReference>
<dbReference type="SMR" id="Q6CPB1"/>
<dbReference type="FunCoup" id="Q6CPB1">
    <property type="interactions" value="962"/>
</dbReference>
<dbReference type="STRING" id="284590.Q6CPB1"/>
<dbReference type="PaxDb" id="284590-Q6CPB1"/>
<dbReference type="KEGG" id="kla:KLLA0_E06227g"/>
<dbReference type="eggNOG" id="KOG2688">
    <property type="taxonomic scope" value="Eukaryota"/>
</dbReference>
<dbReference type="HOGENOM" id="CLU_031567_2_1_1"/>
<dbReference type="InParanoid" id="Q6CPB1"/>
<dbReference type="OMA" id="ESQTNWI"/>
<dbReference type="Proteomes" id="UP000000598">
    <property type="component" value="Chromosome E"/>
</dbReference>
<dbReference type="GO" id="GO:0008180">
    <property type="term" value="C:COP9 signalosome"/>
    <property type="evidence" value="ECO:0007669"/>
    <property type="project" value="UniProtKB-KW"/>
</dbReference>
<dbReference type="GO" id="GO:0005737">
    <property type="term" value="C:cytoplasm"/>
    <property type="evidence" value="ECO:0007669"/>
    <property type="project" value="UniProtKB-SubCell"/>
</dbReference>
<dbReference type="GO" id="GO:0003690">
    <property type="term" value="F:double-stranded DNA binding"/>
    <property type="evidence" value="ECO:0007669"/>
    <property type="project" value="InterPro"/>
</dbReference>
<dbReference type="GO" id="GO:0003723">
    <property type="term" value="F:RNA binding"/>
    <property type="evidence" value="ECO:0007669"/>
    <property type="project" value="InterPro"/>
</dbReference>
<dbReference type="Gene3D" id="1.10.10.10">
    <property type="entry name" value="Winged helix-like DNA-binding domain superfamily/Winged helix DNA-binding domain"/>
    <property type="match status" value="1"/>
</dbReference>
<dbReference type="InterPro" id="IPR045114">
    <property type="entry name" value="Csn12-like"/>
</dbReference>
<dbReference type="InterPro" id="IPR000717">
    <property type="entry name" value="PCI_dom"/>
</dbReference>
<dbReference type="InterPro" id="IPR036388">
    <property type="entry name" value="WH-like_DNA-bd_sf"/>
</dbReference>
<dbReference type="PANTHER" id="PTHR12732:SF0">
    <property type="entry name" value="PCI DOMAIN-CONTAINING PROTEIN 2"/>
    <property type="match status" value="1"/>
</dbReference>
<dbReference type="PANTHER" id="PTHR12732">
    <property type="entry name" value="UNCHARACTERIZED PROTEASOME COMPONENT REGION PCI-CONTAINING"/>
    <property type="match status" value="1"/>
</dbReference>
<dbReference type="Pfam" id="PF01399">
    <property type="entry name" value="PCI"/>
    <property type="match status" value="1"/>
</dbReference>
<dbReference type="SMART" id="SM00753">
    <property type="entry name" value="PAM"/>
    <property type="match status" value="1"/>
</dbReference>
<dbReference type="PROSITE" id="PS50250">
    <property type="entry name" value="PCI"/>
    <property type="match status" value="1"/>
</dbReference>
<protein>
    <recommendedName>
        <fullName>COP9 signalosome complex subunit 12</fullName>
    </recommendedName>
</protein>
<reference key="1">
    <citation type="journal article" date="2004" name="Nature">
        <title>Genome evolution in yeasts.</title>
        <authorList>
            <person name="Dujon B."/>
            <person name="Sherman D."/>
            <person name="Fischer G."/>
            <person name="Durrens P."/>
            <person name="Casaregola S."/>
            <person name="Lafontaine I."/>
            <person name="de Montigny J."/>
            <person name="Marck C."/>
            <person name="Neuveglise C."/>
            <person name="Talla E."/>
            <person name="Goffard N."/>
            <person name="Frangeul L."/>
            <person name="Aigle M."/>
            <person name="Anthouard V."/>
            <person name="Babour A."/>
            <person name="Barbe V."/>
            <person name="Barnay S."/>
            <person name="Blanchin S."/>
            <person name="Beckerich J.-M."/>
            <person name="Beyne E."/>
            <person name="Bleykasten C."/>
            <person name="Boisrame A."/>
            <person name="Boyer J."/>
            <person name="Cattolico L."/>
            <person name="Confanioleri F."/>
            <person name="de Daruvar A."/>
            <person name="Despons L."/>
            <person name="Fabre E."/>
            <person name="Fairhead C."/>
            <person name="Ferry-Dumazet H."/>
            <person name="Groppi A."/>
            <person name="Hantraye F."/>
            <person name="Hennequin C."/>
            <person name="Jauniaux N."/>
            <person name="Joyet P."/>
            <person name="Kachouri R."/>
            <person name="Kerrest A."/>
            <person name="Koszul R."/>
            <person name="Lemaire M."/>
            <person name="Lesur I."/>
            <person name="Ma L."/>
            <person name="Muller H."/>
            <person name="Nicaud J.-M."/>
            <person name="Nikolski M."/>
            <person name="Oztas S."/>
            <person name="Ozier-Kalogeropoulos O."/>
            <person name="Pellenz S."/>
            <person name="Potier S."/>
            <person name="Richard G.-F."/>
            <person name="Straub M.-L."/>
            <person name="Suleau A."/>
            <person name="Swennen D."/>
            <person name="Tekaia F."/>
            <person name="Wesolowski-Louvel M."/>
            <person name="Westhof E."/>
            <person name="Wirth B."/>
            <person name="Zeniou-Meyer M."/>
            <person name="Zivanovic Y."/>
            <person name="Bolotin-Fukuhara M."/>
            <person name="Thierry A."/>
            <person name="Bouchier C."/>
            <person name="Caudron B."/>
            <person name="Scarpelli C."/>
            <person name="Gaillardin C."/>
            <person name="Weissenbach J."/>
            <person name="Wincker P."/>
            <person name="Souciet J.-L."/>
        </authorList>
    </citation>
    <scope>NUCLEOTIDE SEQUENCE [LARGE SCALE GENOMIC DNA]</scope>
    <source>
        <strain>ATCC 8585 / CBS 2359 / DSM 70799 / NBRC 1267 / NRRL Y-1140 / WM37</strain>
    </source>
</reference>
<comment type="function">
    <text>Component of the COP9 signalosome (CSN) complex that acts as an regulator of the ubiquitin (Ubl) conjugation pathway by mediating the deneddylation of the cullin subunit of SCF-type E3 ubiquitin-protein ligase complexes. The CSN complex is involved in the regulation of the mating pheromone response.</text>
</comment>
<comment type="subunit">
    <text>Component of a COP9 signalosome-like (CSN) complex.</text>
</comment>
<comment type="subcellular location">
    <subcellularLocation>
        <location evidence="1">Cytoplasm</location>
    </subcellularLocation>
    <subcellularLocation>
        <location evidence="1">Nucleus</location>
    </subcellularLocation>
</comment>
<comment type="similarity">
    <text evidence="3">Belongs to the CSN12 family.</text>
</comment>
<evidence type="ECO:0000250" key="1"/>
<evidence type="ECO:0000255" key="2">
    <source>
        <dbReference type="PROSITE-ProRule" id="PRU01185"/>
    </source>
</evidence>
<evidence type="ECO:0000305" key="3"/>
<proteinExistence type="inferred from homology"/>
<feature type="chain" id="PRO_0000121042" description="COP9 signalosome complex subunit 12">
    <location>
        <begin position="1"/>
        <end position="424"/>
    </location>
</feature>
<feature type="domain" description="PCI" evidence="2">
    <location>
        <begin position="224"/>
        <end position="415"/>
    </location>
</feature>
<sequence length="424" mass="49736">MAQLVYLCFRDNTLSEPFSNLIDMKYDHQIKVSKPSFKLPEFEKVKQLIEICNELKRTYKKEPNGGSPQLFHLALEQLRVLNRIYENRTNWMTELLYQSGEQLYAIANKLDEIQNKLDGPEDTGDGDEEESYLIQAGRVMHMTLNICFKDRNERVDENRKIGVFYIGTLLFKLYNRIKAYGLLNNMCKVFESHFNEIGPYLSRINNDLIVIRFKFYMGLYYGYEKNNYALGFKWLQETFDICTLYESIPSTYKVRSQVLIYLIPMRILHLRHYPRLAPLRRTYPSVAKIYTMLVKSLCTGNLKLYEKFIEDNEFYLVKRNLYVTVLKMKELVELKLVKKAWILNGGNTKVPLDMLAKAFQISRGTPCHVTENVAPNHDQELDELECILATLISKNYIKGYLSHSHRVMMTSKTPFPGLAKPLER</sequence>